<sequence length="308" mass="35251">MPIRIPTELPAQSILNSENIFVMDTDRAAMQDIRPLEVGILNLMPNKMETEVQFLRLLSNTPLQINVDLIRIDNQAPKNTPESHMKAFYQNFDDVADKQYDGLIVTGAPLALLDYDDVKYWQKMKVVLEWAQRHVQSTLFSCWAAHAALYHFHGKNRRLRDEKLSGIFAHQVKDEHNELMRGFDPVFHAPHSRYGEISVADYESVEGLSVLASSEKTGAYIVASDDKRLVFVTGHPEYDPDSLDQEYKRDLKAGLTPNMPENYYPDDDPAQGPLVTWRAHGSLLFTNWLNYYVYQNTPYDLASLSNKA</sequence>
<protein>
    <recommendedName>
        <fullName evidence="1">Homoserine O-succinyltransferase</fullName>
        <shortName evidence="1 3">HST</shortName>
        <ecNumber evidence="1 2">2.3.1.46</ecNumber>
    </recommendedName>
    <alternativeName>
        <fullName evidence="1">Homoserine transsuccinylase</fullName>
        <shortName evidence="1">HTS</shortName>
    </alternativeName>
</protein>
<reference key="1">
    <citation type="submission" date="2006-06" db="EMBL/GenBank/DDBJ databases">
        <title>Complete sequence of Pseudoalteromonas atlantica T6c.</title>
        <authorList>
            <consortium name="US DOE Joint Genome Institute"/>
            <person name="Copeland A."/>
            <person name="Lucas S."/>
            <person name="Lapidus A."/>
            <person name="Barry K."/>
            <person name="Detter J.C."/>
            <person name="Glavina del Rio T."/>
            <person name="Hammon N."/>
            <person name="Israni S."/>
            <person name="Dalin E."/>
            <person name="Tice H."/>
            <person name="Pitluck S."/>
            <person name="Saunders E."/>
            <person name="Brettin T."/>
            <person name="Bruce D."/>
            <person name="Han C."/>
            <person name="Tapia R."/>
            <person name="Gilna P."/>
            <person name="Schmutz J."/>
            <person name="Larimer F."/>
            <person name="Land M."/>
            <person name="Hauser L."/>
            <person name="Kyrpides N."/>
            <person name="Kim E."/>
            <person name="Karls A.C."/>
            <person name="Bartlett D."/>
            <person name="Higgins B.P."/>
            <person name="Richardson P."/>
        </authorList>
    </citation>
    <scope>NUCLEOTIDE SEQUENCE [LARGE SCALE GENOMIC DNA]</scope>
    <source>
        <strain>T6c / ATCC BAA-1087</strain>
    </source>
</reference>
<reference key="2">
    <citation type="journal article" date="2017" name="Nat. Chem. Biol.">
        <title>Parallel evolution of non-homologous isofunctional enzymes in methionine biosynthesis.</title>
        <authorList>
            <person name="Bastard K."/>
            <person name="Perret A."/>
            <person name="Mariage A."/>
            <person name="Bessonnet T."/>
            <person name="Pinet-Turpault A."/>
            <person name="Petit J.L."/>
            <person name="Darii E."/>
            <person name="Bazire P."/>
            <person name="Vergne-Vaxelaire C."/>
            <person name="Brewee C."/>
            <person name="Debard A."/>
            <person name="Pellouin V."/>
            <person name="Besnard-Gonnet M."/>
            <person name="Artiguenave F."/>
            <person name="Medigue C."/>
            <person name="Vallenet D."/>
            <person name="Danchin A."/>
            <person name="Zaparucha A."/>
            <person name="Weissenbach J."/>
            <person name="Salanoubat M."/>
            <person name="de Berardinis V."/>
        </authorList>
    </citation>
    <scope>FUNCTION</scope>
    <scope>CATALYTIC ACTIVITY</scope>
</reference>
<evidence type="ECO:0000255" key="1">
    <source>
        <dbReference type="HAMAP-Rule" id="MF_00295"/>
    </source>
</evidence>
<evidence type="ECO:0000269" key="2">
    <source>
    </source>
</evidence>
<evidence type="ECO:0000303" key="3">
    <source>
    </source>
</evidence>
<evidence type="ECO:0000312" key="4">
    <source>
        <dbReference type="EMBL" id="ABG41527.1"/>
    </source>
</evidence>
<proteinExistence type="evidence at protein level"/>
<gene>
    <name evidence="1 3" type="primary">metAS</name>
    <name evidence="4" type="ordered locus">Patl_3021</name>
</gene>
<name>METAS_PSEA6</name>
<comment type="function">
    <text evidence="1 2">Transfers a succinyl group from succinyl-CoA to L-homoserine, forming succinyl-L-homoserine.</text>
</comment>
<comment type="catalytic activity">
    <reaction evidence="1 2">
        <text>L-homoserine + succinyl-CoA = O-succinyl-L-homoserine + CoA</text>
        <dbReference type="Rhea" id="RHEA:22008"/>
        <dbReference type="ChEBI" id="CHEBI:57287"/>
        <dbReference type="ChEBI" id="CHEBI:57292"/>
        <dbReference type="ChEBI" id="CHEBI:57476"/>
        <dbReference type="ChEBI" id="CHEBI:57661"/>
        <dbReference type="EC" id="2.3.1.46"/>
    </reaction>
</comment>
<comment type="pathway">
    <text evidence="1">Amino-acid biosynthesis; L-methionine biosynthesis via de novo pathway; O-succinyl-L-homoserine from L-homoserine: step 1/1.</text>
</comment>
<comment type="subcellular location">
    <subcellularLocation>
        <location evidence="1">Cytoplasm</location>
    </subcellularLocation>
</comment>
<comment type="similarity">
    <text evidence="1">Belongs to the MetA family.</text>
</comment>
<dbReference type="EC" id="2.3.1.46" evidence="1 2"/>
<dbReference type="EMBL" id="CP000388">
    <property type="protein sequence ID" value="ABG41527.1"/>
    <property type="molecule type" value="Genomic_DNA"/>
</dbReference>
<dbReference type="RefSeq" id="WP_011575771.1">
    <property type="nucleotide sequence ID" value="NC_008228.1"/>
</dbReference>
<dbReference type="SMR" id="Q15RG1"/>
<dbReference type="STRING" id="342610.Patl_3021"/>
<dbReference type="KEGG" id="pat:Patl_3021"/>
<dbReference type="eggNOG" id="COG1897">
    <property type="taxonomic scope" value="Bacteria"/>
</dbReference>
<dbReference type="HOGENOM" id="CLU_057851_0_1_6"/>
<dbReference type="OrthoDB" id="9772423at2"/>
<dbReference type="UniPathway" id="UPA00051">
    <property type="reaction ID" value="UER00075"/>
</dbReference>
<dbReference type="Proteomes" id="UP000001981">
    <property type="component" value="Chromosome"/>
</dbReference>
<dbReference type="GO" id="GO:0005737">
    <property type="term" value="C:cytoplasm"/>
    <property type="evidence" value="ECO:0007669"/>
    <property type="project" value="UniProtKB-SubCell"/>
</dbReference>
<dbReference type="GO" id="GO:0004414">
    <property type="term" value="F:homoserine O-acetyltransferase activity"/>
    <property type="evidence" value="ECO:0007669"/>
    <property type="project" value="UniProtKB-UniRule"/>
</dbReference>
<dbReference type="GO" id="GO:0008899">
    <property type="term" value="F:homoserine O-succinyltransferase activity"/>
    <property type="evidence" value="ECO:0007669"/>
    <property type="project" value="UniProtKB-EC"/>
</dbReference>
<dbReference type="GO" id="GO:0019281">
    <property type="term" value="P:L-methionine biosynthetic process from homoserine via O-succinyl-L-homoserine and cystathionine"/>
    <property type="evidence" value="ECO:0007669"/>
    <property type="project" value="InterPro"/>
</dbReference>
<dbReference type="CDD" id="cd03131">
    <property type="entry name" value="GATase1_HTS"/>
    <property type="match status" value="1"/>
</dbReference>
<dbReference type="FunFam" id="3.40.50.880:FF:000004">
    <property type="entry name" value="Homoserine O-succinyltransferase"/>
    <property type="match status" value="1"/>
</dbReference>
<dbReference type="Gene3D" id="3.40.50.880">
    <property type="match status" value="1"/>
</dbReference>
<dbReference type="HAMAP" id="MF_00295">
    <property type="entry name" value="MetA_acyltransf"/>
    <property type="match status" value="1"/>
</dbReference>
<dbReference type="InterPro" id="IPR029062">
    <property type="entry name" value="Class_I_gatase-like"/>
</dbReference>
<dbReference type="InterPro" id="IPR005697">
    <property type="entry name" value="HST_MetA"/>
</dbReference>
<dbReference type="InterPro" id="IPR033752">
    <property type="entry name" value="MetA_family"/>
</dbReference>
<dbReference type="NCBIfam" id="TIGR01001">
    <property type="entry name" value="metA"/>
    <property type="match status" value="1"/>
</dbReference>
<dbReference type="PANTHER" id="PTHR20919">
    <property type="entry name" value="HOMOSERINE O-SUCCINYLTRANSFERASE"/>
    <property type="match status" value="1"/>
</dbReference>
<dbReference type="PANTHER" id="PTHR20919:SF0">
    <property type="entry name" value="HOMOSERINE O-SUCCINYLTRANSFERASE"/>
    <property type="match status" value="1"/>
</dbReference>
<dbReference type="Pfam" id="PF04204">
    <property type="entry name" value="HTS"/>
    <property type="match status" value="1"/>
</dbReference>
<dbReference type="PIRSF" id="PIRSF000450">
    <property type="entry name" value="H_ser_succinyltr"/>
    <property type="match status" value="1"/>
</dbReference>
<dbReference type="SUPFAM" id="SSF52317">
    <property type="entry name" value="Class I glutamine amidotransferase-like"/>
    <property type="match status" value="1"/>
</dbReference>
<feature type="chain" id="PRO_0000440356" description="Homoserine O-succinyltransferase">
    <location>
        <begin position="1"/>
        <end position="308"/>
    </location>
</feature>
<feature type="active site" description="Acyl-thioester intermediate" evidence="1">
    <location>
        <position position="142"/>
    </location>
</feature>
<feature type="active site" description="Proton acceptor" evidence="1">
    <location>
        <position position="235"/>
    </location>
</feature>
<feature type="active site" evidence="1">
    <location>
        <position position="237"/>
    </location>
</feature>
<feature type="binding site" evidence="1">
    <location>
        <position position="163"/>
    </location>
    <ligand>
        <name>substrate</name>
    </ligand>
</feature>
<feature type="binding site" evidence="1">
    <location>
        <position position="192"/>
    </location>
    <ligand>
        <name>substrate</name>
    </ligand>
</feature>
<feature type="binding site" evidence="1">
    <location>
        <position position="249"/>
    </location>
    <ligand>
        <name>substrate</name>
    </ligand>
</feature>
<feature type="site" description="Important for acyl-CoA specificity" evidence="1">
    <location>
        <position position="111"/>
    </location>
</feature>
<feature type="site" description="Important for substrate specificity" evidence="1">
    <location>
        <position position="192"/>
    </location>
</feature>
<keyword id="KW-0012">Acyltransferase</keyword>
<keyword id="KW-0028">Amino-acid biosynthesis</keyword>
<keyword id="KW-0963">Cytoplasm</keyword>
<keyword id="KW-0486">Methionine biosynthesis</keyword>
<keyword id="KW-0808">Transferase</keyword>
<organism>
    <name type="scientific">Pseudoalteromonas atlantica (strain T6c / ATCC BAA-1087)</name>
    <dbReference type="NCBI Taxonomy" id="3042615"/>
    <lineage>
        <taxon>Bacteria</taxon>
        <taxon>Pseudomonadati</taxon>
        <taxon>Pseudomonadota</taxon>
        <taxon>Gammaproteobacteria</taxon>
        <taxon>Alteromonadales</taxon>
        <taxon>Alteromonadaceae</taxon>
        <taxon>Paraglaciecola</taxon>
    </lineage>
</organism>
<accession>Q15RG1</accession>